<comment type="function">
    <text evidence="1">Non-catalytic component of the proteasome, a multicatalytic proteinase complex which is characterized by its ability to cleave peptides with Arg, Phe, Tyr, Leu, and Glu adjacent to the leaving group at neutral or slightly basic pH. The proteasome has an ATP-dependent proteolytic activity (By similarity).</text>
</comment>
<comment type="subunit">
    <text evidence="1">The 26S proteasome consists of a 20S proteasome core and two 19S regulatory subunits. The 20S proteasome core is composed of 28 subunits that are arranged in four stacked rings, resulting in a barrel-shaped structure. The two end rings are each formed by seven alpha subunits, and the two central rings are each formed by seven beta subunits. The catalytic chamber with the active sites is on the inside of the barrel (By similarity).</text>
</comment>
<comment type="subcellular location">
    <subcellularLocation>
        <location evidence="2">Cytoplasm</location>
    </subcellularLocation>
    <subcellularLocation>
        <location evidence="1">Nucleus</location>
    </subcellularLocation>
</comment>
<comment type="similarity">
    <text evidence="2">Belongs to the peptidase T1B family.</text>
</comment>
<sequence length="205" mass="22458">MSILTYSGGSCLAMAGKECFVVISDNRLGEQLKTISMEVPKLHVINDGIVMGLTGLRTDQQTFAQKVNFRTEMYKLREERDINGKAFAALVSSMLYEARFGPWFVEPVIGTIDRKTGEVYLCATDLIGAPCEPEDYVCAGTCAESLHGMCEALWRPGLEPEELFEVAAQAMLSACDRDSLSGYGAVAAIVTKDKLVTRLIKGRKD</sequence>
<protein>
    <recommendedName>
        <fullName>Proteasome subunit beta type-3</fullName>
    </recommendedName>
    <alternativeName>
        <fullName>20S proteasome subunit beta-3</fullName>
    </alternativeName>
</protein>
<feature type="chain" id="PRO_0000148064" description="Proteasome subunit beta type-3">
    <location>
        <begin position="1"/>
        <end position="205"/>
    </location>
</feature>
<organism>
    <name type="scientific">Trypanosoma brucei brucei</name>
    <dbReference type="NCBI Taxonomy" id="5702"/>
    <lineage>
        <taxon>Eukaryota</taxon>
        <taxon>Discoba</taxon>
        <taxon>Euglenozoa</taxon>
        <taxon>Kinetoplastea</taxon>
        <taxon>Metakinetoplastina</taxon>
        <taxon>Trypanosomatida</taxon>
        <taxon>Trypanosomatidae</taxon>
        <taxon>Trypanosoma</taxon>
    </lineage>
</organism>
<reference key="1">
    <citation type="journal article" date="2001" name="J. Biol. Chem.">
        <title>Functional assignment of the 20 S proteasome from Trypanosoma brucei using mass spectrometry and new bioinformatics approaches.</title>
        <authorList>
            <person name="Huang L."/>
            <person name="Jacob R.J."/>
            <person name="Pegg S.C.H."/>
            <person name="Baldwin M.A."/>
            <person name="Wang C.C."/>
            <person name="Burlingame A.L."/>
            <person name="Babbitt P.C."/>
        </authorList>
    </citation>
    <scope>NUCLEOTIDE SEQUENCE [MRNA]</scope>
    <source>
        <strain>427</strain>
    </source>
</reference>
<proteinExistence type="evidence at transcript level"/>
<keyword id="KW-0963">Cytoplasm</keyword>
<keyword id="KW-0539">Nucleus</keyword>
<keyword id="KW-0647">Proteasome</keyword>
<gene>
    <name type="primary">PSB3</name>
</gene>
<accession>Q9NDA1</accession>
<dbReference type="EMBL" id="AF169653">
    <property type="protein sequence ID" value="AAF89685.1"/>
    <property type="molecule type" value="mRNA"/>
</dbReference>
<dbReference type="SMR" id="Q9NDA1"/>
<dbReference type="BRENDA" id="3.4.25.1">
    <property type="organism ID" value="6519"/>
</dbReference>
<dbReference type="GO" id="GO:0005737">
    <property type="term" value="C:cytoplasm"/>
    <property type="evidence" value="ECO:0000314"/>
    <property type="project" value="GeneDB"/>
</dbReference>
<dbReference type="GO" id="GO:0005654">
    <property type="term" value="C:nucleoplasm"/>
    <property type="evidence" value="ECO:0000314"/>
    <property type="project" value="GeneDB"/>
</dbReference>
<dbReference type="GO" id="GO:0019774">
    <property type="term" value="C:proteasome core complex, beta-subunit complex"/>
    <property type="evidence" value="ECO:0000250"/>
    <property type="project" value="UniProtKB"/>
</dbReference>
<dbReference type="GO" id="GO:0004175">
    <property type="term" value="F:endopeptidase activity"/>
    <property type="evidence" value="ECO:0000304"/>
    <property type="project" value="GeneDB"/>
</dbReference>
<dbReference type="GO" id="GO:0043161">
    <property type="term" value="P:proteasome-mediated ubiquitin-dependent protein catabolic process"/>
    <property type="evidence" value="ECO:0007669"/>
    <property type="project" value="InterPro"/>
</dbReference>
<dbReference type="GO" id="GO:0006511">
    <property type="term" value="P:ubiquitin-dependent protein catabolic process"/>
    <property type="evidence" value="ECO:0000255"/>
    <property type="project" value="GeneDB"/>
</dbReference>
<dbReference type="CDD" id="cd03759">
    <property type="entry name" value="proteasome_beta_type_3"/>
    <property type="match status" value="1"/>
</dbReference>
<dbReference type="FunFam" id="3.60.20.10:FF:000003">
    <property type="entry name" value="Proteasome subunit beta type-3"/>
    <property type="match status" value="1"/>
</dbReference>
<dbReference type="Gene3D" id="3.60.20.10">
    <property type="entry name" value="Glutamine Phosphoribosylpyrophosphate, subunit 1, domain 1"/>
    <property type="match status" value="1"/>
</dbReference>
<dbReference type="InterPro" id="IPR029055">
    <property type="entry name" value="Ntn_hydrolases_N"/>
</dbReference>
<dbReference type="InterPro" id="IPR033811">
    <property type="entry name" value="Proteasome_beta_3"/>
</dbReference>
<dbReference type="InterPro" id="IPR016050">
    <property type="entry name" value="Proteasome_bsu_CS"/>
</dbReference>
<dbReference type="InterPro" id="IPR001353">
    <property type="entry name" value="Proteasome_sua/b"/>
</dbReference>
<dbReference type="InterPro" id="IPR023333">
    <property type="entry name" value="Proteasome_suB-type"/>
</dbReference>
<dbReference type="PANTHER" id="PTHR32194">
    <property type="entry name" value="METALLOPROTEASE TLDD"/>
    <property type="match status" value="1"/>
</dbReference>
<dbReference type="PANTHER" id="PTHR32194:SF10">
    <property type="entry name" value="PROTEASOME SUBUNIT BETA TYPE-3"/>
    <property type="match status" value="1"/>
</dbReference>
<dbReference type="Pfam" id="PF00227">
    <property type="entry name" value="Proteasome"/>
    <property type="match status" value="1"/>
</dbReference>
<dbReference type="SUPFAM" id="SSF56235">
    <property type="entry name" value="N-terminal nucleophile aminohydrolases (Ntn hydrolases)"/>
    <property type="match status" value="1"/>
</dbReference>
<dbReference type="PROSITE" id="PS00854">
    <property type="entry name" value="PROTEASOME_BETA_1"/>
    <property type="match status" value="1"/>
</dbReference>
<dbReference type="PROSITE" id="PS51476">
    <property type="entry name" value="PROTEASOME_BETA_2"/>
    <property type="match status" value="1"/>
</dbReference>
<name>PSB3_TRYBB</name>
<evidence type="ECO:0000250" key="1"/>
<evidence type="ECO:0000255" key="2">
    <source>
        <dbReference type="PROSITE-ProRule" id="PRU00809"/>
    </source>
</evidence>